<sequence>MRSSAPMPRMSRRGRVTIGVLVGVFVLFTLLGWGVQAWTDWLWFGKVDYTEVFSGVLVTRLLLFVTVGLAMAVVVGGNLWLAHRLRPRLRPQSPEQATLERYRMLLSPRLGTWFAVVSVVVGLFAGLSAQSRWSQWLLFRNGGDFGVKDPEFGIDIGFYVFDLPFWRYLLGVAFTAVVLALIGALAVHYVFGGVRLQGVGDRMSNAARAHLSALVAVFVLLKAVAYVLDRRTMLLEYNDGANVYGAGYADINALLPAKEILAYISVVVAIAVLVFSNAWMRNLVWPGISLALLGVSAVAIGGIYPWAVQTFEVKPSARDKEARYIERSIEATRAAFNLGGVETRRYAASNLQPPASLATDTAVVPNARLLDPQLVSETYTQLQQVRGFYDFGPKLDIDRYAVEGKTQDYVVGVREINYGELTAQQSNWINRHTVYTHGYGLVAAPANRVVCGGQPYFVSGFLGDRSQEGCAAPTDQIPASQPRIYYGERMEAGDYAIVGKSNPDANPAEFDRPVGEGDDGAESYYTYTGSGGVEIGSFSRRLLYAIKEQESNFLLSEAVNENSKLLYVRNPRERVEKVAPFLTVDGDPYPAVIDGRVTWIIDGYTTAATYPYAERINLQTETTDELTNRGTFQQARENINYIRNSVKATVDAYDGTVTLYEFDDGDPVLRAWNKAFGGDLIKSKTEIPAELSAHFRYPADLFKVQRNVLTRFHVTSPGDFYSGQDFWQVPNVPDAPDSGQKQPPYYLFTQFPGQEEARFQLTAAVTPNRRQNLAALMSGSYVDGKPQLEVLELPEDTRISGPVQVHQQMTNNAQIRQQLNLLSSNQAQVQYGNLLSLPFGDGMLYVEPVYVKSNQQQAYPLLQKVLLSYGDGGSFVVLADNLADGIKQLVEQGEKAGAPSTPPPSGETPAPTPTPTPTPSSPSVTPPPVTGELADAAQRVQAAIVELRAAQESGDFERYGRALKALDEATAAFEQAAGPGSAATPTGSPSPGG</sequence>
<accession>A8M3D7</accession>
<feature type="chain" id="PRO_0000335550" description="UPF0182 protein Sare_4110">
    <location>
        <begin position="1"/>
        <end position="993"/>
    </location>
</feature>
<feature type="transmembrane region" description="Helical" evidence="1">
    <location>
        <begin position="18"/>
        <end position="38"/>
    </location>
</feature>
<feature type="transmembrane region" description="Helical" evidence="1">
    <location>
        <begin position="61"/>
        <end position="81"/>
    </location>
</feature>
<feature type="transmembrane region" description="Helical" evidence="1">
    <location>
        <begin position="110"/>
        <end position="130"/>
    </location>
</feature>
<feature type="transmembrane region" description="Helical" evidence="1">
    <location>
        <begin position="171"/>
        <end position="191"/>
    </location>
</feature>
<feature type="transmembrane region" description="Helical" evidence="1">
    <location>
        <begin position="209"/>
        <end position="229"/>
    </location>
</feature>
<feature type="transmembrane region" description="Helical" evidence="1">
    <location>
        <begin position="260"/>
        <end position="280"/>
    </location>
</feature>
<feature type="transmembrane region" description="Helical" evidence="1">
    <location>
        <begin position="283"/>
        <end position="303"/>
    </location>
</feature>
<feature type="region of interest" description="Disordered" evidence="2">
    <location>
        <begin position="892"/>
        <end position="937"/>
    </location>
</feature>
<feature type="region of interest" description="Disordered" evidence="2">
    <location>
        <begin position="974"/>
        <end position="993"/>
    </location>
</feature>
<feature type="compositionally biased region" description="Pro residues" evidence="2">
    <location>
        <begin position="900"/>
        <end position="929"/>
    </location>
</feature>
<feature type="compositionally biased region" description="Low complexity" evidence="2">
    <location>
        <begin position="976"/>
        <end position="993"/>
    </location>
</feature>
<protein>
    <recommendedName>
        <fullName evidence="1">UPF0182 protein Sare_4110</fullName>
    </recommendedName>
</protein>
<organism>
    <name type="scientific">Salinispora arenicola (strain CNS-205)</name>
    <dbReference type="NCBI Taxonomy" id="391037"/>
    <lineage>
        <taxon>Bacteria</taxon>
        <taxon>Bacillati</taxon>
        <taxon>Actinomycetota</taxon>
        <taxon>Actinomycetes</taxon>
        <taxon>Micromonosporales</taxon>
        <taxon>Micromonosporaceae</taxon>
        <taxon>Salinispora</taxon>
    </lineage>
</organism>
<reference key="1">
    <citation type="submission" date="2007-10" db="EMBL/GenBank/DDBJ databases">
        <title>Complete sequence of Salinispora arenicola CNS-205.</title>
        <authorList>
            <consortium name="US DOE Joint Genome Institute"/>
            <person name="Copeland A."/>
            <person name="Lucas S."/>
            <person name="Lapidus A."/>
            <person name="Barry K."/>
            <person name="Glavina del Rio T."/>
            <person name="Dalin E."/>
            <person name="Tice H."/>
            <person name="Pitluck S."/>
            <person name="Foster B."/>
            <person name="Schmutz J."/>
            <person name="Larimer F."/>
            <person name="Land M."/>
            <person name="Hauser L."/>
            <person name="Kyrpides N."/>
            <person name="Ivanova N."/>
            <person name="Jensen P.R."/>
            <person name="Moore B.S."/>
            <person name="Penn K."/>
            <person name="Jenkins C."/>
            <person name="Udwary D."/>
            <person name="Xiang L."/>
            <person name="Gontang E."/>
            <person name="Richardson P."/>
        </authorList>
    </citation>
    <scope>NUCLEOTIDE SEQUENCE [LARGE SCALE GENOMIC DNA]</scope>
    <source>
        <strain>CNS-205</strain>
    </source>
</reference>
<proteinExistence type="inferred from homology"/>
<name>Y4110_SALAI</name>
<keyword id="KW-1003">Cell membrane</keyword>
<keyword id="KW-0472">Membrane</keyword>
<keyword id="KW-0812">Transmembrane</keyword>
<keyword id="KW-1133">Transmembrane helix</keyword>
<gene>
    <name type="ordered locus">Sare_4110</name>
</gene>
<evidence type="ECO:0000255" key="1">
    <source>
        <dbReference type="HAMAP-Rule" id="MF_01600"/>
    </source>
</evidence>
<evidence type="ECO:0000256" key="2">
    <source>
        <dbReference type="SAM" id="MobiDB-lite"/>
    </source>
</evidence>
<comment type="subcellular location">
    <subcellularLocation>
        <location evidence="1">Cell membrane</location>
        <topology evidence="1">Multi-pass membrane protein</topology>
    </subcellularLocation>
</comment>
<comment type="similarity">
    <text evidence="1">Belongs to the UPF0182 family.</text>
</comment>
<dbReference type="EMBL" id="CP000850">
    <property type="protein sequence ID" value="ABV99900.1"/>
    <property type="molecule type" value="Genomic_DNA"/>
</dbReference>
<dbReference type="SMR" id="A8M3D7"/>
<dbReference type="STRING" id="391037.Sare_4110"/>
<dbReference type="KEGG" id="saq:Sare_4110"/>
<dbReference type="eggNOG" id="COG1615">
    <property type="taxonomic scope" value="Bacteria"/>
</dbReference>
<dbReference type="HOGENOM" id="CLU_007733_1_0_11"/>
<dbReference type="GO" id="GO:0005576">
    <property type="term" value="C:extracellular region"/>
    <property type="evidence" value="ECO:0007669"/>
    <property type="project" value="TreeGrafter"/>
</dbReference>
<dbReference type="GO" id="GO:0005886">
    <property type="term" value="C:plasma membrane"/>
    <property type="evidence" value="ECO:0007669"/>
    <property type="project" value="UniProtKB-SubCell"/>
</dbReference>
<dbReference type="HAMAP" id="MF_01600">
    <property type="entry name" value="UPF0182"/>
    <property type="match status" value="1"/>
</dbReference>
<dbReference type="InterPro" id="IPR005372">
    <property type="entry name" value="UPF0182"/>
</dbReference>
<dbReference type="NCBIfam" id="NF000825">
    <property type="entry name" value="PRK00068.1"/>
    <property type="match status" value="1"/>
</dbReference>
<dbReference type="PANTHER" id="PTHR39344">
    <property type="entry name" value="UPF0182 PROTEIN SLL1060"/>
    <property type="match status" value="1"/>
</dbReference>
<dbReference type="PANTHER" id="PTHR39344:SF1">
    <property type="entry name" value="UPF0182 PROTEIN SLL1060"/>
    <property type="match status" value="1"/>
</dbReference>
<dbReference type="Pfam" id="PF03699">
    <property type="entry name" value="UPF0182"/>
    <property type="match status" value="1"/>
</dbReference>